<protein>
    <recommendedName>
        <fullName evidence="6">RNA interference defective protein 10</fullName>
    </recommendedName>
</protein>
<feature type="chain" id="PRO_0000434604" description="RNA interference defective protein 10" evidence="4">
    <location>
        <begin position="1"/>
        <end position="627"/>
    </location>
</feature>
<feature type="region of interest" description="Disordered" evidence="1">
    <location>
        <begin position="1"/>
        <end position="31"/>
    </location>
</feature>
<feature type="region of interest" description="Disordered" evidence="1">
    <location>
        <begin position="467"/>
        <end position="487"/>
    </location>
</feature>
<feature type="region of interest" description="Disordered" evidence="1">
    <location>
        <begin position="523"/>
        <end position="589"/>
    </location>
</feature>
<feature type="compositionally biased region" description="Basic and acidic residues" evidence="1">
    <location>
        <begin position="7"/>
        <end position="16"/>
    </location>
</feature>
<feature type="compositionally biased region" description="Basic and acidic residues" evidence="1">
    <location>
        <begin position="467"/>
        <end position="478"/>
    </location>
</feature>
<feature type="compositionally biased region" description="Basic and acidic residues" evidence="1">
    <location>
        <begin position="526"/>
        <end position="537"/>
    </location>
</feature>
<evidence type="ECO:0000256" key="1">
    <source>
        <dbReference type="SAM" id="MobiDB-lite"/>
    </source>
</evidence>
<evidence type="ECO:0000269" key="2">
    <source>
    </source>
</evidence>
<evidence type="ECO:0000269" key="3">
    <source>
    </source>
</evidence>
<evidence type="ECO:0000305" key="4"/>
<evidence type="ECO:0000312" key="5">
    <source>
        <dbReference type="Proteomes" id="UP000001940"/>
    </source>
</evidence>
<evidence type="ECO:0000312" key="6">
    <source>
        <dbReference type="WormBase" id="Y47G6A.4"/>
    </source>
</evidence>
<name>RDE10_CAEEL</name>
<dbReference type="EMBL" id="BX284601">
    <property type="protein sequence ID" value="CCD72548.1"/>
    <property type="molecule type" value="Genomic_DNA"/>
</dbReference>
<dbReference type="RefSeq" id="NP_491178.1">
    <property type="nucleotide sequence ID" value="NM_058777.7"/>
</dbReference>
<dbReference type="ComplexPortal" id="CPX-1000">
    <property type="entry name" value="Rde-10/Rde-11 complex"/>
</dbReference>
<dbReference type="FunCoup" id="Q9N3S2">
    <property type="interactions" value="694"/>
</dbReference>
<dbReference type="STRING" id="6239.Y47G6A.4.1"/>
<dbReference type="PaxDb" id="6239-Y47G6A.4"/>
<dbReference type="PeptideAtlas" id="Q9N3S2"/>
<dbReference type="EnsemblMetazoa" id="Y47G6A.4.1">
    <property type="protein sequence ID" value="Y47G6A.4.1"/>
    <property type="gene ID" value="WBGene00021634"/>
</dbReference>
<dbReference type="GeneID" id="171923"/>
<dbReference type="KEGG" id="cel:CELE_Y47G6A.4"/>
<dbReference type="UCSC" id="Y47G6A.4">
    <property type="organism name" value="c. elegans"/>
</dbReference>
<dbReference type="AGR" id="WB:WBGene00021634"/>
<dbReference type="CTD" id="171923"/>
<dbReference type="WormBase" id="Y47G6A.4">
    <property type="protein sequence ID" value="CE24371"/>
    <property type="gene ID" value="WBGene00021634"/>
    <property type="gene designation" value="rde-10"/>
</dbReference>
<dbReference type="eggNOG" id="ENOG502QQDI">
    <property type="taxonomic scope" value="Eukaryota"/>
</dbReference>
<dbReference type="HOGENOM" id="CLU_436308_0_0_1"/>
<dbReference type="InParanoid" id="Q9N3S2"/>
<dbReference type="OrthoDB" id="5855540at2759"/>
<dbReference type="PRO" id="PR:Q9N3S2"/>
<dbReference type="Proteomes" id="UP000001940">
    <property type="component" value="Chromosome I"/>
</dbReference>
<dbReference type="Bgee" id="WBGene00021634">
    <property type="expression patterns" value="Expressed in germ line (C elegans) and 4 other cell types or tissues"/>
</dbReference>
<dbReference type="GO" id="GO:0031332">
    <property type="term" value="C:RNAi effector complex"/>
    <property type="evidence" value="ECO:0000303"/>
    <property type="project" value="ComplexPortal"/>
</dbReference>
<dbReference type="GO" id="GO:0060964">
    <property type="term" value="P:regulation of miRNA-mediated gene silencing"/>
    <property type="evidence" value="ECO:0007669"/>
    <property type="project" value="InterPro"/>
</dbReference>
<dbReference type="GO" id="GO:0006417">
    <property type="term" value="P:regulation of translation"/>
    <property type="evidence" value="ECO:0007669"/>
    <property type="project" value="UniProtKB-KW"/>
</dbReference>
<dbReference type="GO" id="GO:0031047">
    <property type="term" value="P:regulatory ncRNA-mediated gene silencing"/>
    <property type="evidence" value="ECO:0007669"/>
    <property type="project" value="UniProtKB-KW"/>
</dbReference>
<dbReference type="InterPro" id="IPR024970">
    <property type="entry name" value="Maelstrom"/>
</dbReference>
<dbReference type="Pfam" id="PF13017">
    <property type="entry name" value="Maelstrom"/>
    <property type="match status" value="1"/>
</dbReference>
<gene>
    <name evidence="6" type="primary">rde-10</name>
    <name evidence="6" type="ORF">Y47G6A.4</name>
</gene>
<keyword id="KW-1185">Reference proteome</keyword>
<keyword id="KW-0678">Repressor</keyword>
<keyword id="KW-0943">RNA-mediated gene silencing</keyword>
<keyword id="KW-0810">Translation regulation</keyword>
<accession>Q9N3S2</accession>
<sequence>MSNHRSNFRDYQREGIRANNAGTSGDAVRQNGNPISVAKHVDGKKSVYMLFLRQIGQKKFLTEQGHRYNQNDQADKDIMTRYYHGMCPDLKQKFEREVAEHNGNRGLVIKTKHQRAQRNREMRHRNPDEFQQLRRAHLETLSQTPSVIALPRDINHVLHITEDLDAFCLANRKKAKRIMTSYIAQRSDDPGNPLLCEDYTMQIVSVFPVAYAFKPSINKLSSYPAEISVTTFNLKNGIIQNESRFVKFDAAWFYPDADDIGHEELSRKAMADELGISPNGPADGCEPYEVFEWLQHLLKQHPKSPILCDRAQFNFVYYGIKTLATYTGINAITFFQEVIIPSILSIQDFTSVILEKAPTDVPRVWRDVDICNQFQYHFLIPRTELNLFCSFHENKPSPTKYNCVKAHNARLLDNFFTVIKGNRLQGFVISPPVHEICIQDGSDTSLPQTILARTISRNDAEVYAARQRDTDEQYDVHQEGPSNHDQYEFASEPLDFEEDSDEENYNEQLDVPYSYNDHFISSSSVREPEHPSARSRDVAPNVQQESVVVPAPRRLSPQRAPRPSQNSPNAYSERKSFSAFPSEDPSEDYETPIISHIMNRNEADQYFNILDSVKPGQKYKIIKFDDF</sequence>
<reference evidence="5" key="1">
    <citation type="journal article" date="1998" name="Science">
        <title>Genome sequence of the nematode C. elegans: a platform for investigating biology.</title>
        <authorList>
            <consortium name="The C. elegans sequencing consortium"/>
        </authorList>
    </citation>
    <scope>NUCLEOTIDE SEQUENCE [LARGE SCALE GENOMIC DNA]</scope>
    <source>
        <strain evidence="5">Bristol N2</strain>
    </source>
</reference>
<reference evidence="4" key="2">
    <citation type="journal article" date="2012" name="Curr. Biol.">
        <title>The Caenorhabditis elegans RDE-10/RDE-11 complex regulates RNAi by promoting secondary siRNA amplification.</title>
        <authorList>
            <person name="Zhang C."/>
            <person name="Montgomery T.A."/>
            <person name="Fischer S.E."/>
            <person name="Garcia S.M."/>
            <person name="Riedel C.G."/>
            <person name="Fahlgren N."/>
            <person name="Sullivan C.M."/>
            <person name="Carrington J.C."/>
            <person name="Ruvkun G."/>
        </authorList>
    </citation>
    <scope>FUNCTION</scope>
    <scope>INTERACTION WITH RDE-11 AND ERGO-1</scope>
    <scope>DISRUPTION PHENOTYPE</scope>
</reference>
<reference evidence="4" key="3">
    <citation type="journal article" date="2012" name="Genes Dev.">
        <title>The RDE-10/RDE-11 complex triggers RNAi-induced mRNA degradation by association with target mRNA in C. elegans.</title>
        <authorList>
            <person name="Yang H."/>
            <person name="Zhang Y."/>
            <person name="Vallandingham J."/>
            <person name="Li H."/>
            <person name="Li H."/>
            <person name="Florens L."/>
            <person name="Mak H.Y."/>
        </authorList>
    </citation>
    <scope>FUNCTION</scope>
    <scope>INTERACTION WITH RDE-11</scope>
</reference>
<proteinExistence type="evidence at protein level"/>
<organism evidence="5">
    <name type="scientific">Caenorhabditis elegans</name>
    <dbReference type="NCBI Taxonomy" id="6239"/>
    <lineage>
        <taxon>Eukaryota</taxon>
        <taxon>Metazoa</taxon>
        <taxon>Ecdysozoa</taxon>
        <taxon>Nematoda</taxon>
        <taxon>Chromadorea</taxon>
        <taxon>Rhabditida</taxon>
        <taxon>Rhabditina</taxon>
        <taxon>Rhabditomorpha</taxon>
        <taxon>Rhabditoidea</taxon>
        <taxon>Rhabditidae</taxon>
        <taxon>Peloderinae</taxon>
        <taxon>Caenorhabditis</taxon>
    </lineage>
</organism>
<comment type="function">
    <text evidence="2 3">In complex with rde-11, required in the endogenous and exogenous siRNA pathway for biogenesis and accumulation of secondary small interfering RNA (siRNA) intermediates, such as 22G-siRNAs derived from ergo-1 targets.</text>
</comment>
<comment type="subunit">
    <text evidence="2 3">Interacts with rde-11 (via RING-type zinc finger domain) (PubMed:22508728, PubMed:22542102). Interacts with ergo-1 (PubMed:22542102).</text>
</comment>
<comment type="disruption phenotype">
    <text evidence="3">Insensitive to RNAi-mediated gene silencing.</text>
</comment>
<comment type="similarity">
    <text evidence="4">Belongs to the maelstrom family.</text>
</comment>